<proteinExistence type="inferred from homology"/>
<accession>B5E9X4</accession>
<protein>
    <recommendedName>
        <fullName evidence="1">Ribosomal protein L11 methyltransferase</fullName>
        <shortName evidence="1">L11 Mtase</shortName>
        <ecNumber evidence="1">2.1.1.-</ecNumber>
    </recommendedName>
</protein>
<reference key="1">
    <citation type="submission" date="2008-07" db="EMBL/GenBank/DDBJ databases">
        <title>Complete sequence of Geobacter bemidjiensis BEM.</title>
        <authorList>
            <consortium name="US DOE Joint Genome Institute"/>
            <person name="Lucas S."/>
            <person name="Copeland A."/>
            <person name="Lapidus A."/>
            <person name="Glavina del Rio T."/>
            <person name="Dalin E."/>
            <person name="Tice H."/>
            <person name="Bruce D."/>
            <person name="Goodwin L."/>
            <person name="Pitluck S."/>
            <person name="Kiss H."/>
            <person name="Brettin T."/>
            <person name="Detter J.C."/>
            <person name="Han C."/>
            <person name="Kuske C.R."/>
            <person name="Schmutz J."/>
            <person name="Larimer F."/>
            <person name="Land M."/>
            <person name="Hauser L."/>
            <person name="Kyrpides N."/>
            <person name="Lykidis A."/>
            <person name="Lovley D."/>
            <person name="Richardson P."/>
        </authorList>
    </citation>
    <scope>NUCLEOTIDE SEQUENCE [LARGE SCALE GENOMIC DNA]</scope>
    <source>
        <strain>ATCC BAA-1014 / DSM 16622 / JCM 12645 / Bem</strain>
    </source>
</reference>
<gene>
    <name evidence="1" type="primary">prmA</name>
    <name type="ordered locus">Gbem_0241</name>
</gene>
<dbReference type="EC" id="2.1.1.-" evidence="1"/>
<dbReference type="EMBL" id="CP001124">
    <property type="protein sequence ID" value="ACH37272.1"/>
    <property type="molecule type" value="Genomic_DNA"/>
</dbReference>
<dbReference type="RefSeq" id="WP_012528680.1">
    <property type="nucleotide sequence ID" value="NC_011146.1"/>
</dbReference>
<dbReference type="SMR" id="B5E9X4"/>
<dbReference type="STRING" id="404380.Gbem_0241"/>
<dbReference type="KEGG" id="gbm:Gbem_0241"/>
<dbReference type="eggNOG" id="COG2264">
    <property type="taxonomic scope" value="Bacteria"/>
</dbReference>
<dbReference type="HOGENOM" id="CLU_049382_0_1_7"/>
<dbReference type="OrthoDB" id="9785995at2"/>
<dbReference type="Proteomes" id="UP000008825">
    <property type="component" value="Chromosome"/>
</dbReference>
<dbReference type="GO" id="GO:0005737">
    <property type="term" value="C:cytoplasm"/>
    <property type="evidence" value="ECO:0007669"/>
    <property type="project" value="UniProtKB-SubCell"/>
</dbReference>
<dbReference type="GO" id="GO:0016279">
    <property type="term" value="F:protein-lysine N-methyltransferase activity"/>
    <property type="evidence" value="ECO:0007669"/>
    <property type="project" value="RHEA"/>
</dbReference>
<dbReference type="GO" id="GO:0032259">
    <property type="term" value="P:methylation"/>
    <property type="evidence" value="ECO:0007669"/>
    <property type="project" value="UniProtKB-KW"/>
</dbReference>
<dbReference type="CDD" id="cd02440">
    <property type="entry name" value="AdoMet_MTases"/>
    <property type="match status" value="1"/>
</dbReference>
<dbReference type="Gene3D" id="3.40.50.150">
    <property type="entry name" value="Vaccinia Virus protein VP39"/>
    <property type="match status" value="1"/>
</dbReference>
<dbReference type="HAMAP" id="MF_00735">
    <property type="entry name" value="Methyltr_PrmA"/>
    <property type="match status" value="1"/>
</dbReference>
<dbReference type="InterPro" id="IPR050078">
    <property type="entry name" value="Ribosomal_L11_MeTrfase_PrmA"/>
</dbReference>
<dbReference type="InterPro" id="IPR004498">
    <property type="entry name" value="Ribosomal_PrmA_MeTrfase"/>
</dbReference>
<dbReference type="InterPro" id="IPR029063">
    <property type="entry name" value="SAM-dependent_MTases_sf"/>
</dbReference>
<dbReference type="NCBIfam" id="TIGR00406">
    <property type="entry name" value="prmA"/>
    <property type="match status" value="1"/>
</dbReference>
<dbReference type="PANTHER" id="PTHR43648">
    <property type="entry name" value="ELECTRON TRANSFER FLAVOPROTEIN BETA SUBUNIT LYSINE METHYLTRANSFERASE"/>
    <property type="match status" value="1"/>
</dbReference>
<dbReference type="PANTHER" id="PTHR43648:SF1">
    <property type="entry name" value="ELECTRON TRANSFER FLAVOPROTEIN BETA SUBUNIT LYSINE METHYLTRANSFERASE"/>
    <property type="match status" value="1"/>
</dbReference>
<dbReference type="Pfam" id="PF06325">
    <property type="entry name" value="PrmA"/>
    <property type="match status" value="1"/>
</dbReference>
<dbReference type="PIRSF" id="PIRSF000401">
    <property type="entry name" value="RPL11_MTase"/>
    <property type="match status" value="1"/>
</dbReference>
<dbReference type="SUPFAM" id="SSF53335">
    <property type="entry name" value="S-adenosyl-L-methionine-dependent methyltransferases"/>
    <property type="match status" value="1"/>
</dbReference>
<keyword id="KW-0963">Cytoplasm</keyword>
<keyword id="KW-0489">Methyltransferase</keyword>
<keyword id="KW-1185">Reference proteome</keyword>
<keyword id="KW-0949">S-adenosyl-L-methionine</keyword>
<keyword id="KW-0808">Transferase</keyword>
<feature type="chain" id="PRO_1000132799" description="Ribosomal protein L11 methyltransferase">
    <location>
        <begin position="1"/>
        <end position="306"/>
    </location>
</feature>
<feature type="binding site" evidence="1">
    <location>
        <position position="152"/>
    </location>
    <ligand>
        <name>S-adenosyl-L-methionine</name>
        <dbReference type="ChEBI" id="CHEBI:59789"/>
    </ligand>
</feature>
<feature type="binding site" evidence="1">
    <location>
        <position position="179"/>
    </location>
    <ligand>
        <name>S-adenosyl-L-methionine</name>
        <dbReference type="ChEBI" id="CHEBI:59789"/>
    </ligand>
</feature>
<feature type="binding site" evidence="1">
    <location>
        <position position="201"/>
    </location>
    <ligand>
        <name>S-adenosyl-L-methionine</name>
        <dbReference type="ChEBI" id="CHEBI:59789"/>
    </ligand>
</feature>
<feature type="binding site" evidence="1">
    <location>
        <position position="243"/>
    </location>
    <ligand>
        <name>S-adenosyl-L-methionine</name>
        <dbReference type="ChEBI" id="CHEBI:59789"/>
    </ligand>
</feature>
<name>PRMA_CITBB</name>
<organism>
    <name type="scientific">Citrifermentans bemidjiense (strain ATCC BAA-1014 / DSM 16622 / JCM 12645 / Bem)</name>
    <name type="common">Geobacter bemidjiensis</name>
    <dbReference type="NCBI Taxonomy" id="404380"/>
    <lineage>
        <taxon>Bacteria</taxon>
        <taxon>Pseudomonadati</taxon>
        <taxon>Thermodesulfobacteriota</taxon>
        <taxon>Desulfuromonadia</taxon>
        <taxon>Geobacterales</taxon>
        <taxon>Geobacteraceae</taxon>
        <taxon>Citrifermentans</taxon>
    </lineage>
</organism>
<comment type="function">
    <text evidence="1">Methylates ribosomal protein L11.</text>
</comment>
<comment type="catalytic activity">
    <reaction evidence="1">
        <text>L-lysyl-[protein] + 3 S-adenosyl-L-methionine = N(6),N(6),N(6)-trimethyl-L-lysyl-[protein] + 3 S-adenosyl-L-homocysteine + 3 H(+)</text>
        <dbReference type="Rhea" id="RHEA:54192"/>
        <dbReference type="Rhea" id="RHEA-COMP:9752"/>
        <dbReference type="Rhea" id="RHEA-COMP:13826"/>
        <dbReference type="ChEBI" id="CHEBI:15378"/>
        <dbReference type="ChEBI" id="CHEBI:29969"/>
        <dbReference type="ChEBI" id="CHEBI:57856"/>
        <dbReference type="ChEBI" id="CHEBI:59789"/>
        <dbReference type="ChEBI" id="CHEBI:61961"/>
    </reaction>
</comment>
<comment type="subcellular location">
    <subcellularLocation>
        <location evidence="1">Cytoplasm</location>
    </subcellularLocation>
</comment>
<comment type="similarity">
    <text evidence="1">Belongs to the methyltransferase superfamily. PrmA family.</text>
</comment>
<sequence>MTTDWAEIACEVPAEMVDSLADFLVELTGNGVGIDNLHLDTFSLDTLEDTPLKSVKGYLPLDDSLEEMRIRIEQFLAQTGPSFPGYVYAPPVVTVIRNEDWANNWKVHFKPVRIGQRLVIKPTWEEYLKLEGDLVIQIDPGMAFGTGAHPTTKMCLEALERICFDASGGKLPSPVLDVGTGSGVLSIAAALLGAKEIVAVDIDPEAVRVTMENLELNGVADLVAASTTSLEQLPGGFRVVVANILAEELVRLADELTARVAPGGWLILSGILTEKEAFVCAAFNSLELVENPKELEWSCLSFRKPL</sequence>
<evidence type="ECO:0000255" key="1">
    <source>
        <dbReference type="HAMAP-Rule" id="MF_00735"/>
    </source>
</evidence>